<keyword id="KW-0240">DNA-directed RNA polymerase</keyword>
<keyword id="KW-0548">Nucleotidyltransferase</keyword>
<keyword id="KW-1185">Reference proteome</keyword>
<keyword id="KW-0804">Transcription</keyword>
<keyword id="KW-0808">Transferase</keyword>
<dbReference type="EC" id="2.7.7.6" evidence="1"/>
<dbReference type="EMBL" id="AJ749949">
    <property type="protein sequence ID" value="CAG45336.1"/>
    <property type="molecule type" value="Genomic_DNA"/>
</dbReference>
<dbReference type="RefSeq" id="WP_003019409.1">
    <property type="nucleotide sequence ID" value="NZ_CP010290.1"/>
</dbReference>
<dbReference type="RefSeq" id="YP_169719.1">
    <property type="nucleotide sequence ID" value="NC_006570.2"/>
</dbReference>
<dbReference type="SMR" id="Q5NGX3"/>
<dbReference type="STRING" id="177416.FTT_0703"/>
<dbReference type="DNASU" id="3191977"/>
<dbReference type="EnsemblBacteria" id="CAG45336">
    <property type="protein sequence ID" value="CAG45336"/>
    <property type="gene ID" value="FTT_0703"/>
</dbReference>
<dbReference type="KEGG" id="ftu:FTT_0703"/>
<dbReference type="eggNOG" id="COG1758">
    <property type="taxonomic scope" value="Bacteria"/>
</dbReference>
<dbReference type="OrthoDB" id="9796300at2"/>
<dbReference type="Proteomes" id="UP000001174">
    <property type="component" value="Chromosome"/>
</dbReference>
<dbReference type="GO" id="GO:0000428">
    <property type="term" value="C:DNA-directed RNA polymerase complex"/>
    <property type="evidence" value="ECO:0007669"/>
    <property type="project" value="UniProtKB-KW"/>
</dbReference>
<dbReference type="GO" id="GO:0003677">
    <property type="term" value="F:DNA binding"/>
    <property type="evidence" value="ECO:0007669"/>
    <property type="project" value="UniProtKB-UniRule"/>
</dbReference>
<dbReference type="GO" id="GO:0003899">
    <property type="term" value="F:DNA-directed RNA polymerase activity"/>
    <property type="evidence" value="ECO:0007669"/>
    <property type="project" value="UniProtKB-UniRule"/>
</dbReference>
<dbReference type="GO" id="GO:0006351">
    <property type="term" value="P:DNA-templated transcription"/>
    <property type="evidence" value="ECO:0007669"/>
    <property type="project" value="UniProtKB-UniRule"/>
</dbReference>
<dbReference type="Gene3D" id="3.90.940.10">
    <property type="match status" value="1"/>
</dbReference>
<dbReference type="HAMAP" id="MF_00366">
    <property type="entry name" value="RNApol_bact_RpoZ"/>
    <property type="match status" value="1"/>
</dbReference>
<dbReference type="InterPro" id="IPR003716">
    <property type="entry name" value="DNA-dir_RNA_pol_omega"/>
</dbReference>
<dbReference type="InterPro" id="IPR006110">
    <property type="entry name" value="Pol_omega/Rpo6/RPB6"/>
</dbReference>
<dbReference type="InterPro" id="IPR036161">
    <property type="entry name" value="RPB6/omega-like_sf"/>
</dbReference>
<dbReference type="NCBIfam" id="TIGR00690">
    <property type="entry name" value="rpoZ"/>
    <property type="match status" value="1"/>
</dbReference>
<dbReference type="PANTHER" id="PTHR34476">
    <property type="entry name" value="DNA-DIRECTED RNA POLYMERASE SUBUNIT OMEGA"/>
    <property type="match status" value="1"/>
</dbReference>
<dbReference type="PANTHER" id="PTHR34476:SF1">
    <property type="entry name" value="DNA-DIRECTED RNA POLYMERASE SUBUNIT OMEGA"/>
    <property type="match status" value="1"/>
</dbReference>
<dbReference type="Pfam" id="PF01192">
    <property type="entry name" value="RNA_pol_Rpb6"/>
    <property type="match status" value="1"/>
</dbReference>
<dbReference type="SMART" id="SM01409">
    <property type="entry name" value="RNA_pol_Rpb6"/>
    <property type="match status" value="1"/>
</dbReference>
<dbReference type="SUPFAM" id="SSF63562">
    <property type="entry name" value="RPB6/omega subunit-like"/>
    <property type="match status" value="1"/>
</dbReference>
<comment type="function">
    <text evidence="1">Promotes RNA polymerase assembly. Latches the N- and C-terminal regions of the beta' subunit thereby facilitating its interaction with the beta and alpha subunits.</text>
</comment>
<comment type="catalytic activity">
    <reaction evidence="1">
        <text>RNA(n) + a ribonucleoside 5'-triphosphate = RNA(n+1) + diphosphate</text>
        <dbReference type="Rhea" id="RHEA:21248"/>
        <dbReference type="Rhea" id="RHEA-COMP:14527"/>
        <dbReference type="Rhea" id="RHEA-COMP:17342"/>
        <dbReference type="ChEBI" id="CHEBI:33019"/>
        <dbReference type="ChEBI" id="CHEBI:61557"/>
        <dbReference type="ChEBI" id="CHEBI:140395"/>
        <dbReference type="EC" id="2.7.7.6"/>
    </reaction>
</comment>
<comment type="subunit">
    <text evidence="1">The RNAP catalytic core consists of 2 alpha, 1 beta, 1 beta' and 1 omega subunit. When a sigma factor is associated with the core the holoenzyme is formed, which can initiate transcription.</text>
</comment>
<comment type="similarity">
    <text evidence="1">Belongs to the RNA polymerase subunit omega family.</text>
</comment>
<sequence length="72" mass="8183">MARVTVEDCLDKVETRFDLVVLASMRANKILKNGYSESMENEKKEKATVVALREIAESEITPEQILRNEIEG</sequence>
<gene>
    <name evidence="1" type="primary">rpoZ</name>
    <name type="ordered locus">FTT_0703</name>
</gene>
<reference key="1">
    <citation type="journal article" date="2005" name="Nat. Genet.">
        <title>The complete genome sequence of Francisella tularensis, the causative agent of tularemia.</title>
        <authorList>
            <person name="Larsson P."/>
            <person name="Oyston P.C.F."/>
            <person name="Chain P."/>
            <person name="Chu M.C."/>
            <person name="Duffield M."/>
            <person name="Fuxelius H.-H."/>
            <person name="Garcia E."/>
            <person name="Haelltorp G."/>
            <person name="Johansson D."/>
            <person name="Isherwood K.E."/>
            <person name="Karp P.D."/>
            <person name="Larsson E."/>
            <person name="Liu Y."/>
            <person name="Michell S."/>
            <person name="Prior J."/>
            <person name="Prior R."/>
            <person name="Malfatti S."/>
            <person name="Sjoestedt A."/>
            <person name="Svensson K."/>
            <person name="Thompson N."/>
            <person name="Vergez L."/>
            <person name="Wagg J.K."/>
            <person name="Wren B.W."/>
            <person name="Lindler L.E."/>
            <person name="Andersson S.G.E."/>
            <person name="Forsman M."/>
            <person name="Titball R.W."/>
        </authorList>
    </citation>
    <scope>NUCLEOTIDE SEQUENCE [LARGE SCALE GENOMIC DNA]</scope>
    <source>
        <strain>SCHU S4 / Schu 4</strain>
    </source>
</reference>
<proteinExistence type="inferred from homology"/>
<accession>Q5NGX3</accession>
<feature type="chain" id="PRO_0000237459" description="DNA-directed RNA polymerase subunit omega">
    <location>
        <begin position="1"/>
        <end position="72"/>
    </location>
</feature>
<organism>
    <name type="scientific">Francisella tularensis subsp. tularensis (strain SCHU S4 / Schu 4)</name>
    <dbReference type="NCBI Taxonomy" id="177416"/>
    <lineage>
        <taxon>Bacteria</taxon>
        <taxon>Pseudomonadati</taxon>
        <taxon>Pseudomonadota</taxon>
        <taxon>Gammaproteobacteria</taxon>
        <taxon>Thiotrichales</taxon>
        <taxon>Francisellaceae</taxon>
        <taxon>Francisella</taxon>
    </lineage>
</organism>
<evidence type="ECO:0000255" key="1">
    <source>
        <dbReference type="HAMAP-Rule" id="MF_00366"/>
    </source>
</evidence>
<name>RPOZ_FRATT</name>
<protein>
    <recommendedName>
        <fullName evidence="1">DNA-directed RNA polymerase subunit omega</fullName>
        <shortName evidence="1">RNAP omega subunit</shortName>
        <ecNumber evidence="1">2.7.7.6</ecNumber>
    </recommendedName>
    <alternativeName>
        <fullName evidence="1">RNA polymerase omega subunit</fullName>
    </alternativeName>
    <alternativeName>
        <fullName evidence="1">Transcriptase subunit omega</fullName>
    </alternativeName>
</protein>